<protein>
    <recommendedName>
        <fullName evidence="1">Potassium-transporting ATPase potassium-binding subunit</fullName>
    </recommendedName>
    <alternativeName>
        <fullName evidence="1">ATP phosphohydrolase [potassium-transporting] A chain</fullName>
    </alternativeName>
    <alternativeName>
        <fullName evidence="1">Potassium-binding and translocating subunit A</fullName>
    </alternativeName>
    <alternativeName>
        <fullName evidence="1">Potassium-translocating ATPase A chain</fullName>
    </alternativeName>
</protein>
<evidence type="ECO:0000255" key="1">
    <source>
        <dbReference type="HAMAP-Rule" id="MF_00275"/>
    </source>
</evidence>
<gene>
    <name evidence="1" type="primary">kdpA</name>
    <name type="ordered locus">BMA1876</name>
</gene>
<proteinExistence type="inferred from homology"/>
<organism>
    <name type="scientific">Burkholderia mallei (strain ATCC 23344)</name>
    <dbReference type="NCBI Taxonomy" id="243160"/>
    <lineage>
        <taxon>Bacteria</taxon>
        <taxon>Pseudomonadati</taxon>
        <taxon>Pseudomonadota</taxon>
        <taxon>Betaproteobacteria</taxon>
        <taxon>Burkholderiales</taxon>
        <taxon>Burkholderiaceae</taxon>
        <taxon>Burkholderia</taxon>
        <taxon>pseudomallei group</taxon>
    </lineage>
</organism>
<name>KDPA_BURMA</name>
<comment type="function">
    <text evidence="1">Part of the high-affinity ATP-driven potassium transport (or Kdp) system, which catalyzes the hydrolysis of ATP coupled with the electrogenic transport of potassium into the cytoplasm. This subunit binds the periplasmic potassium ions and delivers the ions to the membrane domain of KdpB through an intramembrane tunnel.</text>
</comment>
<comment type="subunit">
    <text evidence="1">The system is composed of three essential subunits: KdpA, KdpB and KdpC.</text>
</comment>
<comment type="subcellular location">
    <subcellularLocation>
        <location evidence="1">Cell inner membrane</location>
        <topology evidence="1">Multi-pass membrane protein</topology>
    </subcellularLocation>
</comment>
<comment type="similarity">
    <text evidence="1">Belongs to the KdpA family.</text>
</comment>
<feature type="chain" id="PRO_0000166487" description="Potassium-transporting ATPase potassium-binding subunit">
    <location>
        <begin position="1"/>
        <end position="602"/>
    </location>
</feature>
<feature type="transmembrane region" description="Helical" evidence="1">
    <location>
        <begin position="3"/>
        <end position="23"/>
    </location>
</feature>
<feature type="transmembrane region" description="Helical" evidence="1">
    <location>
        <begin position="64"/>
        <end position="84"/>
    </location>
</feature>
<feature type="transmembrane region" description="Helical" evidence="1">
    <location>
        <begin position="135"/>
        <end position="155"/>
    </location>
</feature>
<feature type="transmembrane region" description="Helical" evidence="1">
    <location>
        <begin position="178"/>
        <end position="198"/>
    </location>
</feature>
<feature type="transmembrane region" description="Helical" evidence="1">
    <location>
        <begin position="282"/>
        <end position="302"/>
    </location>
</feature>
<feature type="transmembrane region" description="Helical" evidence="1">
    <location>
        <begin position="313"/>
        <end position="333"/>
    </location>
</feature>
<feature type="transmembrane region" description="Helical" evidence="1">
    <location>
        <begin position="418"/>
        <end position="438"/>
    </location>
</feature>
<feature type="transmembrane region" description="Helical" evidence="1">
    <location>
        <begin position="456"/>
        <end position="476"/>
    </location>
</feature>
<feature type="transmembrane region" description="Helical" evidence="1">
    <location>
        <begin position="522"/>
        <end position="542"/>
    </location>
</feature>
<feature type="transmembrane region" description="Helical" evidence="1">
    <location>
        <begin position="565"/>
        <end position="585"/>
    </location>
</feature>
<keyword id="KW-0997">Cell inner membrane</keyword>
<keyword id="KW-1003">Cell membrane</keyword>
<keyword id="KW-0406">Ion transport</keyword>
<keyword id="KW-0472">Membrane</keyword>
<keyword id="KW-0630">Potassium</keyword>
<keyword id="KW-0633">Potassium transport</keyword>
<keyword id="KW-1185">Reference proteome</keyword>
<keyword id="KW-0812">Transmembrane</keyword>
<keyword id="KW-1133">Transmembrane helix</keyword>
<keyword id="KW-0813">Transport</keyword>
<accession>Q62IJ6</accession>
<dbReference type="EMBL" id="CP000010">
    <property type="protein sequence ID" value="AAU49437.1"/>
    <property type="molecule type" value="Genomic_DNA"/>
</dbReference>
<dbReference type="RefSeq" id="WP_004185359.1">
    <property type="nucleotide sequence ID" value="NC_006348.1"/>
</dbReference>
<dbReference type="RefSeq" id="YP_103474.1">
    <property type="nucleotide sequence ID" value="NC_006348.1"/>
</dbReference>
<dbReference type="SMR" id="Q62IJ6"/>
<dbReference type="GeneID" id="93059652"/>
<dbReference type="KEGG" id="bma:BMA1876"/>
<dbReference type="PATRIC" id="fig|243160.12.peg.1917"/>
<dbReference type="eggNOG" id="COG2060">
    <property type="taxonomic scope" value="Bacteria"/>
</dbReference>
<dbReference type="HOGENOM" id="CLU_018614_3_0_4"/>
<dbReference type="Proteomes" id="UP000006693">
    <property type="component" value="Chromosome 1"/>
</dbReference>
<dbReference type="GO" id="GO:0005886">
    <property type="term" value="C:plasma membrane"/>
    <property type="evidence" value="ECO:0007669"/>
    <property type="project" value="UniProtKB-SubCell"/>
</dbReference>
<dbReference type="GO" id="GO:0008556">
    <property type="term" value="F:P-type potassium transmembrane transporter activity"/>
    <property type="evidence" value="ECO:0007669"/>
    <property type="project" value="InterPro"/>
</dbReference>
<dbReference type="GO" id="GO:0030955">
    <property type="term" value="F:potassium ion binding"/>
    <property type="evidence" value="ECO:0007669"/>
    <property type="project" value="UniProtKB-UniRule"/>
</dbReference>
<dbReference type="HAMAP" id="MF_00275">
    <property type="entry name" value="KdpA"/>
    <property type="match status" value="1"/>
</dbReference>
<dbReference type="InterPro" id="IPR004623">
    <property type="entry name" value="KdpA"/>
</dbReference>
<dbReference type="NCBIfam" id="TIGR00680">
    <property type="entry name" value="kdpA"/>
    <property type="match status" value="1"/>
</dbReference>
<dbReference type="PANTHER" id="PTHR30607">
    <property type="entry name" value="POTASSIUM-TRANSPORTING ATPASE A CHAIN"/>
    <property type="match status" value="1"/>
</dbReference>
<dbReference type="PANTHER" id="PTHR30607:SF2">
    <property type="entry name" value="POTASSIUM-TRANSPORTING ATPASE POTASSIUM-BINDING SUBUNIT"/>
    <property type="match status" value="1"/>
</dbReference>
<dbReference type="Pfam" id="PF03814">
    <property type="entry name" value="KdpA"/>
    <property type="match status" value="1"/>
</dbReference>
<dbReference type="PIRSF" id="PIRSF001294">
    <property type="entry name" value="K_ATPaseA"/>
    <property type="match status" value="1"/>
</dbReference>
<sequence>MNANNLLQAAIFIVVLIAAAVPVARYLTRVMDGSSAVVRVFGPLERALYRLAGIDPLTEMSWKQYALATVAFNALGVLFLYALLRVQGWLPGNPQGFGPMTVDGALNTAVSFVTNTNWQDYTPEQTVSYLAQMLGLTVQNFLSAATGIVVVLALIRGFARHTAQTIGNFWVDVTRVTLYVLVPMAAIIAALLMSQGVIQNTKAYQDVPTLQTTSYAAPRLDAQGNPVKDAKGNPVTVQTSVKAQTLAMGPVASQEAIKMLGTNGGGFFNGNSSHPYENPTPFSNFLEIFAILIIPAALCLVFGNTIGDRRQGVAVLAAMTVALAAAIGIETSAEQGGTPVLASLNVDQAASPLQAGGNMEGKETRFGIAQTGLFVVATTAASCGAVDAMHDSLTPVGGLVPMLLMQLGEVIFGGVGSGLYGMLVFALLAVFVAGLMIGRTPEYVGKKIESYEMKMVSIVVLLTPLLVLVGTSIAVLADAGRAGIANPGPHGFSEILYAFSSAANNNGSAFGGLSVNTPFYNWMTAIAMWFGRFGTIVPVLAIAGSLAAKKRIAATSGTLPTHGPLFVVLLLGTVLLVGALTYMPALALGPGVEHLMLFVGAH</sequence>
<reference key="1">
    <citation type="journal article" date="2004" name="Proc. Natl. Acad. Sci. U.S.A.">
        <title>Structural flexibility in the Burkholderia mallei genome.</title>
        <authorList>
            <person name="Nierman W.C."/>
            <person name="DeShazer D."/>
            <person name="Kim H.S."/>
            <person name="Tettelin H."/>
            <person name="Nelson K.E."/>
            <person name="Feldblyum T.V."/>
            <person name="Ulrich R.L."/>
            <person name="Ronning C.M."/>
            <person name="Brinkac L.M."/>
            <person name="Daugherty S.C."/>
            <person name="Davidsen T.D."/>
            <person name="DeBoy R.T."/>
            <person name="Dimitrov G."/>
            <person name="Dodson R.J."/>
            <person name="Durkin A.S."/>
            <person name="Gwinn M.L."/>
            <person name="Haft D.H."/>
            <person name="Khouri H.M."/>
            <person name="Kolonay J.F."/>
            <person name="Madupu R."/>
            <person name="Mohammoud Y."/>
            <person name="Nelson W.C."/>
            <person name="Radune D."/>
            <person name="Romero C.M."/>
            <person name="Sarria S."/>
            <person name="Selengut J."/>
            <person name="Shamblin C."/>
            <person name="Sullivan S.A."/>
            <person name="White O."/>
            <person name="Yu Y."/>
            <person name="Zafar N."/>
            <person name="Zhou L."/>
            <person name="Fraser C.M."/>
        </authorList>
    </citation>
    <scope>NUCLEOTIDE SEQUENCE [LARGE SCALE GENOMIC DNA]</scope>
    <source>
        <strain>ATCC 23344</strain>
    </source>
</reference>